<reference key="1">
    <citation type="journal article" date="2007" name="Nature">
        <title>Evolution of genes and genomes on the Drosophila phylogeny.</title>
        <authorList>
            <consortium name="Drosophila 12 genomes consortium"/>
        </authorList>
    </citation>
    <scope>NUCLEOTIDE SEQUENCE [LARGE SCALE GENOMIC DNA]</scope>
    <source>
        <strain>Tucson 14021-0224.01</strain>
    </source>
</reference>
<accession>B3NK72</accession>
<organism>
    <name type="scientific">Drosophila erecta</name>
    <name type="common">Fruit fly</name>
    <dbReference type="NCBI Taxonomy" id="7220"/>
    <lineage>
        <taxon>Eukaryota</taxon>
        <taxon>Metazoa</taxon>
        <taxon>Ecdysozoa</taxon>
        <taxon>Arthropoda</taxon>
        <taxon>Hexapoda</taxon>
        <taxon>Insecta</taxon>
        <taxon>Pterygota</taxon>
        <taxon>Neoptera</taxon>
        <taxon>Endopterygota</taxon>
        <taxon>Diptera</taxon>
        <taxon>Brachycera</taxon>
        <taxon>Muscomorpha</taxon>
        <taxon>Ephydroidea</taxon>
        <taxon>Drosophilidae</taxon>
        <taxon>Drosophila</taxon>
        <taxon>Sophophora</taxon>
    </lineage>
</organism>
<comment type="similarity">
    <text evidence="1">Belongs to the ubiquitin-conjugating enzyme family. FTS subfamily.</text>
</comment>
<comment type="caution">
    <text evidence="2">Lacks the conserved Cys residue necessary for ubiquitin-conjugating enzyme E2 activity.</text>
</comment>
<sequence length="266" mass="30905">MWYSTESNPRIALIKQGYHILAEYNLVKEELKNIYAIPSYACALHWFGVIFVHSGIYAGSVFRFSILLPENFPDDVSLLTVVFSTGILHPHICPQNRTLDLEHFLKEWRKDQHHIWHVLRYIQAIFADPEGSICTGQSSSGDLVVMDEVRNMEALNMLAQSRPEYIKRVQEQAIASRNHIYDRPLTDDPHYIIVEPYCADRHLKIMDQLKSPCWKEATSMDCSQPSEYLGHIDSSRQLDEEEANQLEKLRRARIPEPHRDEAVDFL</sequence>
<evidence type="ECO:0000255" key="1">
    <source>
        <dbReference type="PROSITE-ProRule" id="PRU00388"/>
    </source>
</evidence>
<evidence type="ECO:0000305" key="2"/>
<dbReference type="EMBL" id="CH954179">
    <property type="protein sequence ID" value="EDV55271.1"/>
    <property type="molecule type" value="Genomic_DNA"/>
</dbReference>
<dbReference type="SMR" id="B3NK72"/>
<dbReference type="EnsemblMetazoa" id="FBtr0140936">
    <property type="protein sequence ID" value="FBpp0139428"/>
    <property type="gene ID" value="FBgn0113066"/>
</dbReference>
<dbReference type="EnsemblMetazoa" id="XM_001974835.3">
    <property type="protein sequence ID" value="XP_001974871.1"/>
    <property type="gene ID" value="LOC6547264"/>
</dbReference>
<dbReference type="GeneID" id="6547264"/>
<dbReference type="KEGG" id="der:6547264"/>
<dbReference type="eggNOG" id="KOG0429">
    <property type="taxonomic scope" value="Eukaryota"/>
</dbReference>
<dbReference type="HOGENOM" id="CLU_083049_2_0_1"/>
<dbReference type="OMA" id="DQHHIWH"/>
<dbReference type="OrthoDB" id="5596422at2759"/>
<dbReference type="PhylomeDB" id="B3NK72"/>
<dbReference type="Proteomes" id="UP000008711">
    <property type="component" value="Unassembled WGS sequence"/>
</dbReference>
<dbReference type="CDD" id="cd23814">
    <property type="entry name" value="UEV_AKTIP"/>
    <property type="match status" value="1"/>
</dbReference>
<dbReference type="Gene3D" id="3.10.110.10">
    <property type="entry name" value="Ubiquitin Conjugating Enzyme"/>
    <property type="match status" value="1"/>
</dbReference>
<dbReference type="InterPro" id="IPR000608">
    <property type="entry name" value="UBQ-conjugat_E2_core"/>
</dbReference>
<dbReference type="InterPro" id="IPR016135">
    <property type="entry name" value="UBQ-conjugating_enzyme/RWD"/>
</dbReference>
<dbReference type="Pfam" id="PF00179">
    <property type="entry name" value="UQ_con"/>
    <property type="match status" value="1"/>
</dbReference>
<dbReference type="SMART" id="SM00212">
    <property type="entry name" value="UBCc"/>
    <property type="match status" value="1"/>
</dbReference>
<dbReference type="SUPFAM" id="SSF54495">
    <property type="entry name" value="UBC-like"/>
    <property type="match status" value="1"/>
</dbReference>
<dbReference type="PROSITE" id="PS50127">
    <property type="entry name" value="UBC_2"/>
    <property type="match status" value="1"/>
</dbReference>
<feature type="chain" id="PRO_0000379042" description="Protein crossbronx-like">
    <location>
        <begin position="1"/>
        <end position="266"/>
    </location>
</feature>
<feature type="domain" description="UBC core" evidence="1">
    <location>
        <begin position="15"/>
        <end position="178"/>
    </location>
</feature>
<protein>
    <recommendedName>
        <fullName>Protein crossbronx-like</fullName>
    </recommendedName>
</protein>
<proteinExistence type="inferred from homology"/>
<gene>
    <name type="ORF">GG20882</name>
</gene>
<name>AKTP2_DROER</name>